<dbReference type="EMBL" id="U37010">
    <property type="protein sequence ID" value="AAC49872.1"/>
    <property type="molecule type" value="Genomic_DNA"/>
</dbReference>
<dbReference type="PDB" id="8C3A">
    <property type="method" value="X-ray"/>
    <property type="resolution" value="3.00 A"/>
    <property type="chains" value="AJ/CD=1-99"/>
</dbReference>
<dbReference type="PDB" id="8CQ7">
    <property type="method" value="X-ray"/>
    <property type="resolution" value="3.20 A"/>
    <property type="chains" value="AJ/CD=1-99"/>
</dbReference>
<dbReference type="PDB" id="8CQW">
    <property type="method" value="X-ray"/>
    <property type="resolution" value="3.05 A"/>
    <property type="chains" value="AJ/CD=1-99"/>
</dbReference>
<dbReference type="PDB" id="8CRE">
    <property type="method" value="X-ray"/>
    <property type="resolution" value="3.00 A"/>
    <property type="chains" value="AJ/CD=1-99"/>
</dbReference>
<dbReference type="PDB" id="8OEQ">
    <property type="method" value="X-ray"/>
    <property type="resolution" value="3.30 A"/>
    <property type="chains" value="AJ/CD=1-99"/>
</dbReference>
<dbReference type="PDB" id="8OGJ">
    <property type="method" value="EM"/>
    <property type="resolution" value="3.10 A"/>
    <property type="chains" value="AJ=1-99"/>
</dbReference>
<dbReference type="PDB" id="8OH6">
    <property type="method" value="X-ray"/>
    <property type="resolution" value="3.35 A"/>
    <property type="chains" value="AJ/CD=1-99"/>
</dbReference>
<dbReference type="PDB" id="8OI5">
    <property type="method" value="X-ray"/>
    <property type="resolution" value="2.90 A"/>
    <property type="chains" value="AJ/CD=1-99"/>
</dbReference>
<dbReference type="PDB" id="8OJ3">
    <property type="method" value="X-ray"/>
    <property type="resolution" value="3.50 A"/>
    <property type="chains" value="AJ/CD=1-99"/>
</dbReference>
<dbReference type="PDB" id="8Q5I">
    <property type="method" value="EM"/>
    <property type="resolution" value="2.45 A"/>
    <property type="chains" value="AJ=1-99"/>
</dbReference>
<dbReference type="PDBsum" id="8C3A"/>
<dbReference type="PDBsum" id="8CQ7"/>
<dbReference type="PDBsum" id="8CQW"/>
<dbReference type="PDBsum" id="8CRE"/>
<dbReference type="PDBsum" id="8OEQ"/>
<dbReference type="PDBsum" id="8OGJ"/>
<dbReference type="PDBsum" id="8OH6"/>
<dbReference type="PDBsum" id="8OI5"/>
<dbReference type="PDBsum" id="8OJ3"/>
<dbReference type="PDBsum" id="8Q5I"/>
<dbReference type="EMDB" id="EMD-16874"/>
<dbReference type="SMR" id="P47834"/>
<dbReference type="EnsemblFungi" id="C2_03960W_A-T">
    <property type="protein sequence ID" value="C2_03960W_A-T-p1"/>
    <property type="gene ID" value="C2_03960W_A"/>
</dbReference>
<dbReference type="VEuPathDB" id="FungiDB:C2_03960W_A"/>
<dbReference type="VEuPathDB" id="FungiDB:CAWG_04154"/>
<dbReference type="OMA" id="NKGHKTE"/>
<dbReference type="PhylomeDB" id="P47834"/>
<dbReference type="GO" id="GO:1990904">
    <property type="term" value="C:ribonucleoprotein complex"/>
    <property type="evidence" value="ECO:0007669"/>
    <property type="project" value="UniProtKB-KW"/>
</dbReference>
<dbReference type="GO" id="GO:0005840">
    <property type="term" value="C:ribosome"/>
    <property type="evidence" value="ECO:0007669"/>
    <property type="project" value="UniProtKB-KW"/>
</dbReference>
<dbReference type="GO" id="GO:0003735">
    <property type="term" value="F:structural constituent of ribosome"/>
    <property type="evidence" value="ECO:0007669"/>
    <property type="project" value="InterPro"/>
</dbReference>
<dbReference type="GO" id="GO:0006412">
    <property type="term" value="P:translation"/>
    <property type="evidence" value="ECO:0007669"/>
    <property type="project" value="InterPro"/>
</dbReference>
<dbReference type="FunFam" id="1.10.10.1760:FF:000003">
    <property type="entry name" value="60S ribosomal protein L36"/>
    <property type="match status" value="1"/>
</dbReference>
<dbReference type="Gene3D" id="1.10.10.1760">
    <property type="entry name" value="60S ribosomal protein L36"/>
    <property type="match status" value="1"/>
</dbReference>
<dbReference type="InterPro" id="IPR000509">
    <property type="entry name" value="Ribosomal_eL36"/>
</dbReference>
<dbReference type="InterPro" id="IPR038097">
    <property type="entry name" value="Ribosomal_eL36_sf"/>
</dbReference>
<dbReference type="PANTHER" id="PTHR10114">
    <property type="entry name" value="60S RIBOSOMAL PROTEIN L36"/>
    <property type="match status" value="1"/>
</dbReference>
<dbReference type="Pfam" id="PF01158">
    <property type="entry name" value="Ribosomal_L36e"/>
    <property type="match status" value="1"/>
</dbReference>
<dbReference type="PROSITE" id="PS01190">
    <property type="entry name" value="RIBOSOMAL_L36E"/>
    <property type="match status" value="1"/>
</dbReference>
<organism>
    <name type="scientific">Candida albicans</name>
    <name type="common">Yeast</name>
    <dbReference type="NCBI Taxonomy" id="5476"/>
    <lineage>
        <taxon>Eukaryota</taxon>
        <taxon>Fungi</taxon>
        <taxon>Dikarya</taxon>
        <taxon>Ascomycota</taxon>
        <taxon>Saccharomycotina</taxon>
        <taxon>Pichiomycetes</taxon>
        <taxon>Debaryomycetaceae</taxon>
        <taxon>Candida/Lodderomyces clade</taxon>
        <taxon>Candida</taxon>
    </lineage>
</organism>
<name>RL36_CANAX</name>
<sequence length="99" mass="11067">MAKSGIAAGVNKGRKTTAKEVAPKISYRKGASSQRTVFVRSIVKEVAGLAPYERRLIELIRNAGEKRAKKLAKKRLGTHKRALRKVEEMTQVIAESRRH</sequence>
<protein>
    <recommendedName>
        <fullName evidence="1">Large ribosomal subunit protein eL36</fullName>
    </recommendedName>
    <alternativeName>
        <fullName>60S ribosomal protein L36</fullName>
    </alternativeName>
    <alternativeName>
        <fullName>L39</fullName>
    </alternativeName>
</protein>
<evidence type="ECO:0000305" key="1"/>
<reference key="1">
    <citation type="journal article" date="1997" name="Yeast">
        <title>Characterization and regulation of the genes encoding ribosomal proteins L39 and S7 of the human pathogen Candida albicans.</title>
        <authorList>
            <person name="Delbrueck S."/>
            <person name="Sonneborn A."/>
            <person name="Gerads M."/>
            <person name="Grablowitz A.H."/>
            <person name="Ernst J.F."/>
        </authorList>
    </citation>
    <scope>NUCLEOTIDE SEQUENCE [GENOMIC DNA]</scope>
    <source>
        <strain>SGY243</strain>
    </source>
</reference>
<feature type="chain" id="PRO_0000195017" description="Large ribosomal subunit protein eL36">
    <location>
        <begin position="1"/>
        <end position="99"/>
    </location>
</feature>
<comment type="similarity">
    <text evidence="1">Belongs to the eukaryotic ribosomal protein eL36 family.</text>
</comment>
<keyword id="KW-0002">3D-structure</keyword>
<keyword id="KW-0687">Ribonucleoprotein</keyword>
<keyword id="KW-0689">Ribosomal protein</keyword>
<accession>P47834</accession>
<gene>
    <name type="primary">RPL36</name>
    <name type="synonym">RPL39</name>
</gene>
<proteinExistence type="evidence at protein level"/>